<organism>
    <name type="scientific">Planktothrix agardhii (strain NIVA-CYA 126/8)</name>
    <dbReference type="NCBI Taxonomy" id="388467"/>
    <lineage>
        <taxon>Bacteria</taxon>
        <taxon>Bacillati</taxon>
        <taxon>Cyanobacteriota</taxon>
        <taxon>Cyanophyceae</taxon>
        <taxon>Oscillatoriophycideae</taxon>
        <taxon>Oscillatoriales</taxon>
        <taxon>Microcoleaceae</taxon>
        <taxon>Planktothrix</taxon>
    </lineage>
</organism>
<feature type="chain" id="PRO_0000435423" description="Prephenate decarboxylase">
    <location>
        <begin position="1"/>
        <end position="202"/>
    </location>
</feature>
<proteinExistence type="evidence at protein level"/>
<gene>
    <name evidence="3" type="primary">aerD</name>
    <name type="ORF">A19Y_1631</name>
</gene>
<name>AERD_PLAA1</name>
<dbReference type="EC" id="4.1.1.100" evidence="2"/>
<dbReference type="EMBL" id="CM002803">
    <property type="protein sequence ID" value="KEI66644.1"/>
    <property type="molecule type" value="Genomic_DNA"/>
</dbReference>
<dbReference type="SMR" id="A0A073CEA3"/>
<dbReference type="PATRIC" id="fig|388467.6.peg.1566"/>
<dbReference type="HOGENOM" id="CLU_109848_0_1_3"/>
<dbReference type="Proteomes" id="UP000027395">
    <property type="component" value="Chromosome"/>
</dbReference>
<dbReference type="GO" id="GO:0016829">
    <property type="term" value="F:lyase activity"/>
    <property type="evidence" value="ECO:0007669"/>
    <property type="project" value="UniProtKB-KW"/>
</dbReference>
<dbReference type="SUPFAM" id="SSF53850">
    <property type="entry name" value="Periplasmic binding protein-like II"/>
    <property type="match status" value="1"/>
</dbReference>
<comment type="function">
    <text evidence="1 2">In vivo, involved in the biosynthesis of 2-carboxy-6-hydroxyoctahydroindole (Choi) present in the nonribosomal glycopeptides aeruginoside 126A and B. AerD is an unusual prephenate decarboxylase that avoids the typical aromatization of the cyclohexadienol ring of prephenate. AerD catalyzes the protonation at C8 followed by decarboxylation to produce the dihydro-4-hydroxyphenylpyruvate regioisomer A258 (H2HPP A258)(3-(4-hydroxycyclohexa- 1,5-dienyl)-2-oxopropanoic acid), which is able to undergo a nonenzymatic isomerization to produce dihydro-4-hydroxyphenylpyruvate regioisomer A295 (H2HPP A295)(3-(4-hydroxycyclohex-2-enylidene)-2-oxopropanoic acid).</text>
</comment>
<comment type="catalytic activity">
    <reaction evidence="2">
        <text>prephenate + H(+) = 3-[(4R)-4-hydroxycyclohexa-1,5-dien-1-yl]-2-oxopropanoate + CO2</text>
        <dbReference type="Rhea" id="RHEA:33499"/>
        <dbReference type="ChEBI" id="CHEBI:15378"/>
        <dbReference type="ChEBI" id="CHEBI:16526"/>
        <dbReference type="ChEBI" id="CHEBI:29934"/>
        <dbReference type="ChEBI" id="CHEBI:84354"/>
        <dbReference type="EC" id="4.1.1.100"/>
    </reaction>
</comment>
<comment type="biophysicochemical properties">
    <kinetics>
        <KM evidence="2">170 uM for prephenate</KM>
        <text evidence="2">kcat is 245 min(-1) for decarboxylase activity with prephenate as substrate.</text>
    </kinetics>
</comment>
<comment type="disruption phenotype">
    <text evidence="1">Cells lacking this gene are unable to produce aeruginoside 126A and B.</text>
</comment>
<comment type="similarity">
    <text evidence="4">Belongs to the prephenate decarboxylase family.</text>
</comment>
<accession>A0A073CEA3</accession>
<evidence type="ECO:0000269" key="1">
    <source>
    </source>
</evidence>
<evidence type="ECO:0000269" key="2">
    <source>
    </source>
</evidence>
<evidence type="ECO:0000303" key="3">
    <source>
    </source>
</evidence>
<evidence type="ECO:0000305" key="4"/>
<reference key="1">
    <citation type="journal article" date="2014" name="Appl. Environ. Microbiol.">
        <title>Elucidation of insertion elements encoded on plasmids and in vitro construction of shuttle vectors from the toxic cyanobacterium Planktothrix.</title>
        <authorList>
            <person name="Christiansen G."/>
            <person name="Goesmann A."/>
            <person name="Kurmayer R."/>
        </authorList>
    </citation>
    <scope>NUCLEOTIDE SEQUENCE [LARGE SCALE GENOMIC DNA]</scope>
    <source>
        <strain>NIVA-CYA 126/8</strain>
    </source>
</reference>
<reference key="2">
    <citation type="journal article" date="2007" name="Chem. Biol.">
        <title>Biosynthesis and structure of aeruginoside 126A and 126B, cyanobacterial peptide glycosides bearing a 2-carboxy-6-hydroxyoctahydroindole moiety.</title>
        <authorList>
            <person name="Ishida K."/>
            <person name="Christiansen G."/>
            <person name="Yoshida W.Y."/>
            <person name="Kurmayer R."/>
            <person name="Welker M."/>
            <person name="Valls N."/>
            <person name="Bonjoch J."/>
            <person name="Hertweck C."/>
            <person name="Boerner T."/>
            <person name="Hemscheidt T."/>
            <person name="Dittmann E."/>
        </authorList>
    </citation>
    <scope>FUNCTION</scope>
    <scope>DISRUPTION PHENOTYPE</scope>
    <source>
        <strain>NIVA-CYA 126/8</strain>
    </source>
</reference>
<reference key="3">
    <citation type="journal article" date="2010" name="Biochemistry">
        <title>Prephenate decarboxylases: a new prephenate-utilizing enzyme family that performs nonaromatizing decarboxylation en route to diverse secondary metabolites.</title>
        <authorList>
            <person name="Mahlstedt S."/>
            <person name="Fielding E.N."/>
            <person name="Moore B.S."/>
            <person name="Walsh C.T."/>
        </authorList>
    </citation>
    <scope>FUNCTION</scope>
    <scope>CATALYTIC ACTIVITY</scope>
    <scope>BIOPHYSICOCHEMICAL PROPERTIES</scope>
    <source>
        <strain>NIVA-CYA 126/8</strain>
    </source>
</reference>
<keyword id="KW-0456">Lyase</keyword>
<keyword id="KW-1185">Reference proteome</keyword>
<sequence>MLKFSMEFCYPQPDVKTLIVGTLGPKETSSEQTLNYLITQWQAEQISVTSHLFDTFTELKEALLQDRVDLALVPHAYERVNDFYMEPSLKLGFVFTYPTPIYGLAKRKNEELVWENCTLVTHPAPFPLLPYLLPGYPHQKNIKVEFVNSTSAAAIQVKQGLADLAITNENALKENDLEFIAEYGKIEMSWSIFHKKGTVHRE</sequence>
<protein>
    <recommendedName>
        <fullName evidence="3">Prephenate decarboxylase</fullName>
        <ecNumber evidence="2">4.1.1.100</ecNumber>
    </recommendedName>
    <alternativeName>
        <fullName evidence="3">Aeruginosin biosynthesis protein AerD</fullName>
    </alternativeName>
</protein>